<proteinExistence type="inferred from homology"/>
<accession>Q8D382</accession>
<sequence>MKIKEKMTDFGFSYVKKSKKNSMIEDIFNNVSYKYDLMNDIMSFGVHRIWKNILVYCNSTNPDQKILDLASGTGDITKRLSKLINKKGFIVSLDINRKMLKICRKKIRNSGTIRNIFYIQANSEYLPFKKNIFDSVIVSFGFRNFTEKKKQLSSIFNVLKPGGKLLILEFSKPLFEFLKKIYDIYSFYCIPKMGNIISGNYYSYKYLVESIKIHPSQKKLNKILSESEFCNSEYINISGGIVAIHRCYKF</sequence>
<reference key="1">
    <citation type="journal article" date="2002" name="Nat. Genet.">
        <title>Genome sequence of the endocellular obligate symbiont of tsetse flies, Wigglesworthia glossinidia.</title>
        <authorList>
            <person name="Akman L."/>
            <person name="Yamashita A."/>
            <person name="Watanabe H."/>
            <person name="Oshima K."/>
            <person name="Shiba T."/>
            <person name="Hattori M."/>
            <person name="Aksoy S."/>
        </authorList>
    </citation>
    <scope>NUCLEOTIDE SEQUENCE [LARGE SCALE GENOMIC DNA]</scope>
</reference>
<evidence type="ECO:0000255" key="1">
    <source>
        <dbReference type="HAMAP-Rule" id="MF_01813"/>
    </source>
</evidence>
<evidence type="ECO:0000305" key="2"/>
<organism>
    <name type="scientific">Wigglesworthia glossinidia brevipalpis</name>
    <dbReference type="NCBI Taxonomy" id="36870"/>
    <lineage>
        <taxon>Bacteria</taxon>
        <taxon>Pseudomonadati</taxon>
        <taxon>Pseudomonadota</taxon>
        <taxon>Gammaproteobacteria</taxon>
        <taxon>Enterobacterales</taxon>
        <taxon>Erwiniaceae</taxon>
        <taxon>Wigglesworthia</taxon>
    </lineage>
</organism>
<feature type="chain" id="PRO_0000193351" description="Ubiquinone/menaquinone biosynthesis C-methyltransferase UbiE">
    <location>
        <begin position="1"/>
        <end position="250"/>
    </location>
</feature>
<feature type="binding site" evidence="1">
    <location>
        <position position="73"/>
    </location>
    <ligand>
        <name>S-adenosyl-L-methionine</name>
        <dbReference type="ChEBI" id="CHEBI:59789"/>
    </ligand>
</feature>
<feature type="binding site" evidence="1">
    <location>
        <position position="94"/>
    </location>
    <ligand>
        <name>S-adenosyl-L-methionine</name>
        <dbReference type="ChEBI" id="CHEBI:59789"/>
    </ligand>
</feature>
<feature type="binding site" evidence="1">
    <location>
        <begin position="122"/>
        <end position="123"/>
    </location>
    <ligand>
        <name>S-adenosyl-L-methionine</name>
        <dbReference type="ChEBI" id="CHEBI:59789"/>
    </ligand>
</feature>
<feature type="binding site" evidence="1">
    <location>
        <position position="139"/>
    </location>
    <ligand>
        <name>S-adenosyl-L-methionine</name>
        <dbReference type="ChEBI" id="CHEBI:59789"/>
    </ligand>
</feature>
<gene>
    <name evidence="1" type="primary">ubiE</name>
    <name type="ordered locus">WIGBR1190</name>
</gene>
<dbReference type="EC" id="2.1.1.163" evidence="1"/>
<dbReference type="EC" id="2.1.1.201" evidence="1"/>
<dbReference type="EMBL" id="BA000021">
    <property type="protein sequence ID" value="BAC24265.1"/>
    <property type="status" value="ALT_FRAME"/>
    <property type="molecule type" value="Genomic_DNA"/>
</dbReference>
<dbReference type="SMR" id="Q8D382"/>
<dbReference type="STRING" id="36870.gene:10368598"/>
<dbReference type="KEGG" id="wbr:ubiE"/>
<dbReference type="eggNOG" id="COG2226">
    <property type="taxonomic scope" value="Bacteria"/>
</dbReference>
<dbReference type="HOGENOM" id="CLU_1730687_0_0_6"/>
<dbReference type="UniPathway" id="UPA00079">
    <property type="reaction ID" value="UER00169"/>
</dbReference>
<dbReference type="UniPathway" id="UPA00232"/>
<dbReference type="Proteomes" id="UP000000562">
    <property type="component" value="Chromosome"/>
</dbReference>
<dbReference type="GO" id="GO:0008425">
    <property type="term" value="F:2-methoxy-6-polyprenyl-1,4-benzoquinol methyltransferase activity"/>
    <property type="evidence" value="ECO:0007669"/>
    <property type="project" value="UniProtKB-UniRule"/>
</dbReference>
<dbReference type="GO" id="GO:0043770">
    <property type="term" value="F:demethylmenaquinone methyltransferase activity"/>
    <property type="evidence" value="ECO:0007669"/>
    <property type="project" value="UniProtKB-UniRule"/>
</dbReference>
<dbReference type="GO" id="GO:0009060">
    <property type="term" value="P:aerobic respiration"/>
    <property type="evidence" value="ECO:0007669"/>
    <property type="project" value="UniProtKB-UniRule"/>
</dbReference>
<dbReference type="GO" id="GO:0009234">
    <property type="term" value="P:menaquinone biosynthetic process"/>
    <property type="evidence" value="ECO:0007669"/>
    <property type="project" value="UniProtKB-UniRule"/>
</dbReference>
<dbReference type="GO" id="GO:0032259">
    <property type="term" value="P:methylation"/>
    <property type="evidence" value="ECO:0007669"/>
    <property type="project" value="UniProtKB-KW"/>
</dbReference>
<dbReference type="CDD" id="cd02440">
    <property type="entry name" value="AdoMet_MTases"/>
    <property type="match status" value="1"/>
</dbReference>
<dbReference type="Gene3D" id="3.40.50.150">
    <property type="entry name" value="Vaccinia Virus protein VP39"/>
    <property type="match status" value="1"/>
</dbReference>
<dbReference type="HAMAP" id="MF_01813">
    <property type="entry name" value="MenG_UbiE_methyltr"/>
    <property type="match status" value="1"/>
</dbReference>
<dbReference type="InterPro" id="IPR029063">
    <property type="entry name" value="SAM-dependent_MTases_sf"/>
</dbReference>
<dbReference type="InterPro" id="IPR004033">
    <property type="entry name" value="UbiE/COQ5_MeTrFase"/>
</dbReference>
<dbReference type="InterPro" id="IPR023576">
    <property type="entry name" value="UbiE/COQ5_MeTrFase_CS"/>
</dbReference>
<dbReference type="NCBIfam" id="TIGR01934">
    <property type="entry name" value="MenG_MenH_UbiE"/>
    <property type="match status" value="1"/>
</dbReference>
<dbReference type="PANTHER" id="PTHR43591:SF24">
    <property type="entry name" value="2-METHOXY-6-POLYPRENYL-1,4-BENZOQUINOL METHYLASE, MITOCHONDRIAL"/>
    <property type="match status" value="1"/>
</dbReference>
<dbReference type="PANTHER" id="PTHR43591">
    <property type="entry name" value="METHYLTRANSFERASE"/>
    <property type="match status" value="1"/>
</dbReference>
<dbReference type="Pfam" id="PF01209">
    <property type="entry name" value="Ubie_methyltran"/>
    <property type="match status" value="1"/>
</dbReference>
<dbReference type="SUPFAM" id="SSF53335">
    <property type="entry name" value="S-adenosyl-L-methionine-dependent methyltransferases"/>
    <property type="match status" value="1"/>
</dbReference>
<dbReference type="PROSITE" id="PS51608">
    <property type="entry name" value="SAM_MT_UBIE"/>
    <property type="match status" value="1"/>
</dbReference>
<dbReference type="PROSITE" id="PS01183">
    <property type="entry name" value="UBIE_1"/>
    <property type="match status" value="1"/>
</dbReference>
<name>UBIE_WIGBR</name>
<keyword id="KW-0474">Menaquinone biosynthesis</keyword>
<keyword id="KW-0489">Methyltransferase</keyword>
<keyword id="KW-1185">Reference proteome</keyword>
<keyword id="KW-0949">S-adenosyl-L-methionine</keyword>
<keyword id="KW-0808">Transferase</keyword>
<keyword id="KW-0831">Ubiquinone biosynthesis</keyword>
<comment type="function">
    <text evidence="1">Methyltransferase required for the conversion of demethylmenaquinol (DMKH2) to menaquinol (MKH2) and the conversion of 2-polyprenyl-6-methoxy-1,4-benzoquinol (DDMQH2) to 2-polyprenyl-3-methyl-6-methoxy-1,4-benzoquinol (DMQH2).</text>
</comment>
<comment type="catalytic activity">
    <reaction evidence="1">
        <text>a 2-demethylmenaquinol + S-adenosyl-L-methionine = a menaquinol + S-adenosyl-L-homocysteine + H(+)</text>
        <dbReference type="Rhea" id="RHEA:42640"/>
        <dbReference type="Rhea" id="RHEA-COMP:9539"/>
        <dbReference type="Rhea" id="RHEA-COMP:9563"/>
        <dbReference type="ChEBI" id="CHEBI:15378"/>
        <dbReference type="ChEBI" id="CHEBI:18151"/>
        <dbReference type="ChEBI" id="CHEBI:55437"/>
        <dbReference type="ChEBI" id="CHEBI:57856"/>
        <dbReference type="ChEBI" id="CHEBI:59789"/>
        <dbReference type="EC" id="2.1.1.163"/>
    </reaction>
</comment>
<comment type="catalytic activity">
    <reaction evidence="1">
        <text>a 2-methoxy-6-(all-trans-polyprenyl)benzene-1,4-diol + S-adenosyl-L-methionine = a 5-methoxy-2-methyl-3-(all-trans-polyprenyl)benzene-1,4-diol + S-adenosyl-L-homocysteine + H(+)</text>
        <dbReference type="Rhea" id="RHEA:28286"/>
        <dbReference type="Rhea" id="RHEA-COMP:10858"/>
        <dbReference type="Rhea" id="RHEA-COMP:10859"/>
        <dbReference type="ChEBI" id="CHEBI:15378"/>
        <dbReference type="ChEBI" id="CHEBI:57856"/>
        <dbReference type="ChEBI" id="CHEBI:59789"/>
        <dbReference type="ChEBI" id="CHEBI:84166"/>
        <dbReference type="ChEBI" id="CHEBI:84167"/>
        <dbReference type="EC" id="2.1.1.201"/>
    </reaction>
</comment>
<comment type="pathway">
    <text evidence="1">Quinol/quinone metabolism; menaquinone biosynthesis; menaquinol from 1,4-dihydroxy-2-naphthoate: step 2/2.</text>
</comment>
<comment type="pathway">
    <text evidence="1">Cofactor biosynthesis; ubiquinone biosynthesis.</text>
</comment>
<comment type="similarity">
    <text evidence="1">Belongs to the class I-like SAM-binding methyltransferase superfamily. MenG/UbiE family.</text>
</comment>
<comment type="sequence caution" evidence="2">
    <conflict type="frameshift">
        <sequence resource="EMBL-CDS" id="BAC24265"/>
    </conflict>
</comment>
<protein>
    <recommendedName>
        <fullName evidence="1">Ubiquinone/menaquinone biosynthesis C-methyltransferase UbiE</fullName>
        <ecNumber evidence="1">2.1.1.163</ecNumber>
        <ecNumber evidence="1">2.1.1.201</ecNumber>
    </recommendedName>
    <alternativeName>
        <fullName evidence="1">2-methoxy-6-polyprenyl-1,4-benzoquinol methylase</fullName>
    </alternativeName>
    <alternativeName>
        <fullName evidence="1">Demethylmenaquinone methyltransferase</fullName>
    </alternativeName>
</protein>